<accession>Q9T0A0</accession>
<feature type="chain" id="PRO_0000401412" description="Long chain acyl-CoA synthetase 4">
    <location>
        <begin position="1"/>
        <end position="666"/>
    </location>
</feature>
<feature type="region of interest" description="Fatty acid-binding" evidence="2">
    <location>
        <begin position="495"/>
        <end position="519"/>
    </location>
</feature>
<feature type="binding site" evidence="2">
    <location>
        <begin position="228"/>
        <end position="239"/>
    </location>
    <ligand>
        <name>ATP</name>
        <dbReference type="ChEBI" id="CHEBI:30616"/>
    </ligand>
</feature>
<dbReference type="EC" id="6.2.1.3"/>
<dbReference type="EMBL" id="AF503754">
    <property type="protein sequence ID" value="AAM28871.1"/>
    <property type="molecule type" value="mRNA"/>
</dbReference>
<dbReference type="EMBL" id="AL078468">
    <property type="protein sequence ID" value="CAB43885.1"/>
    <property type="molecule type" value="Genomic_DNA"/>
</dbReference>
<dbReference type="EMBL" id="AL161560">
    <property type="protein sequence ID" value="CAB81303.1"/>
    <property type="molecule type" value="Genomic_DNA"/>
</dbReference>
<dbReference type="EMBL" id="CP002687">
    <property type="protein sequence ID" value="AEE84812.1"/>
    <property type="molecule type" value="Genomic_DNA"/>
</dbReference>
<dbReference type="EMBL" id="AY049239">
    <property type="protein sequence ID" value="AAK83581.1"/>
    <property type="molecule type" value="mRNA"/>
</dbReference>
<dbReference type="PIR" id="T08904">
    <property type="entry name" value="T08904"/>
</dbReference>
<dbReference type="RefSeq" id="NP_194116.1">
    <property type="nucleotide sequence ID" value="NM_118516.5"/>
</dbReference>
<dbReference type="SMR" id="Q9T0A0"/>
<dbReference type="BioGRID" id="13773">
    <property type="interactions" value="4"/>
</dbReference>
<dbReference type="FunCoup" id="Q9T0A0">
    <property type="interactions" value="850"/>
</dbReference>
<dbReference type="STRING" id="3702.Q9T0A0"/>
<dbReference type="iPTMnet" id="Q9T0A0"/>
<dbReference type="PaxDb" id="3702-AT4G23850.1"/>
<dbReference type="ProteomicsDB" id="238406"/>
<dbReference type="EnsemblPlants" id="AT4G23850.1">
    <property type="protein sequence ID" value="AT4G23850.1"/>
    <property type="gene ID" value="AT4G23850"/>
</dbReference>
<dbReference type="GeneID" id="828484"/>
<dbReference type="Gramene" id="AT4G23850.1">
    <property type="protein sequence ID" value="AT4G23850.1"/>
    <property type="gene ID" value="AT4G23850"/>
</dbReference>
<dbReference type="KEGG" id="ath:AT4G23850"/>
<dbReference type="Araport" id="AT4G23850"/>
<dbReference type="TAIR" id="AT4G23850">
    <property type="gene designation" value="LACS4"/>
</dbReference>
<dbReference type="eggNOG" id="KOG1256">
    <property type="taxonomic scope" value="Eukaryota"/>
</dbReference>
<dbReference type="HOGENOM" id="CLU_000022_45_4_1"/>
<dbReference type="InParanoid" id="Q9T0A0"/>
<dbReference type="OMA" id="NRGELCV"/>
<dbReference type="PhylomeDB" id="Q9T0A0"/>
<dbReference type="BioCyc" id="ARA:AT4G23850-MONOMER"/>
<dbReference type="BioCyc" id="MetaCyc:AT4G23850-MONOMER"/>
<dbReference type="SABIO-RK" id="Q9T0A0"/>
<dbReference type="UniPathway" id="UPA00199"/>
<dbReference type="PRO" id="PR:Q9T0A0"/>
<dbReference type="Proteomes" id="UP000006548">
    <property type="component" value="Chromosome 4"/>
</dbReference>
<dbReference type="ExpressionAtlas" id="Q9T0A0">
    <property type="expression patterns" value="baseline and differential"/>
</dbReference>
<dbReference type="GO" id="GO:0005794">
    <property type="term" value="C:Golgi apparatus"/>
    <property type="evidence" value="ECO:0007005"/>
    <property type="project" value="TAIR"/>
</dbReference>
<dbReference type="GO" id="GO:0005524">
    <property type="term" value="F:ATP binding"/>
    <property type="evidence" value="ECO:0007669"/>
    <property type="project" value="UniProtKB-KW"/>
</dbReference>
<dbReference type="GO" id="GO:0004467">
    <property type="term" value="F:long-chain fatty acid-CoA ligase activity"/>
    <property type="evidence" value="ECO:0000314"/>
    <property type="project" value="UniProtKB"/>
</dbReference>
<dbReference type="GO" id="GO:0006631">
    <property type="term" value="P:fatty acid metabolic process"/>
    <property type="evidence" value="ECO:0000304"/>
    <property type="project" value="UniProtKB"/>
</dbReference>
<dbReference type="GO" id="GO:0080024">
    <property type="term" value="P:indolebutyric acid metabolic process"/>
    <property type="evidence" value="ECO:0000314"/>
    <property type="project" value="TAIR"/>
</dbReference>
<dbReference type="CDD" id="cd05927">
    <property type="entry name" value="LC-FACS_euk"/>
    <property type="match status" value="1"/>
</dbReference>
<dbReference type="Gene3D" id="3.40.50.12780">
    <property type="entry name" value="N-terminal domain of ligase-like"/>
    <property type="match status" value="1"/>
</dbReference>
<dbReference type="InterPro" id="IPR020845">
    <property type="entry name" value="AMP-binding_CS"/>
</dbReference>
<dbReference type="InterPro" id="IPR000873">
    <property type="entry name" value="AMP-dep_synth/lig_dom"/>
</dbReference>
<dbReference type="InterPro" id="IPR042099">
    <property type="entry name" value="ANL_N_sf"/>
</dbReference>
<dbReference type="InterPro" id="IPR045311">
    <property type="entry name" value="LC-FACS_euk"/>
</dbReference>
<dbReference type="PANTHER" id="PTHR43272:SF3">
    <property type="entry name" value="LONG CHAIN ACYL-COA SYNTHETASE 4"/>
    <property type="match status" value="1"/>
</dbReference>
<dbReference type="PANTHER" id="PTHR43272">
    <property type="entry name" value="LONG-CHAIN-FATTY-ACID--COA LIGASE"/>
    <property type="match status" value="1"/>
</dbReference>
<dbReference type="Pfam" id="PF00501">
    <property type="entry name" value="AMP-binding"/>
    <property type="match status" value="1"/>
</dbReference>
<dbReference type="SUPFAM" id="SSF56801">
    <property type="entry name" value="Acetyl-CoA synthetase-like"/>
    <property type="match status" value="1"/>
</dbReference>
<dbReference type="PROSITE" id="PS00455">
    <property type="entry name" value="AMP_BINDING"/>
    <property type="match status" value="1"/>
</dbReference>
<name>LACS4_ARATH</name>
<evidence type="ECO:0000250" key="1"/>
<evidence type="ECO:0000255" key="2"/>
<evidence type="ECO:0000269" key="3">
    <source>
    </source>
</evidence>
<evidence type="ECO:0000305" key="4"/>
<organism>
    <name type="scientific">Arabidopsis thaliana</name>
    <name type="common">Mouse-ear cress</name>
    <dbReference type="NCBI Taxonomy" id="3702"/>
    <lineage>
        <taxon>Eukaryota</taxon>
        <taxon>Viridiplantae</taxon>
        <taxon>Streptophyta</taxon>
        <taxon>Embryophyta</taxon>
        <taxon>Tracheophyta</taxon>
        <taxon>Spermatophyta</taxon>
        <taxon>Magnoliopsida</taxon>
        <taxon>eudicotyledons</taxon>
        <taxon>Gunneridae</taxon>
        <taxon>Pentapetalae</taxon>
        <taxon>rosids</taxon>
        <taxon>malvids</taxon>
        <taxon>Brassicales</taxon>
        <taxon>Brassicaceae</taxon>
        <taxon>Camelineae</taxon>
        <taxon>Arabidopsis</taxon>
    </lineage>
</organism>
<reference key="1">
    <citation type="journal article" date="2002" name="Plant Physiol.">
        <title>Arabidopsis contains nine long-chain acyl-coenzyme A synthetase genes that participate in fatty acid and glycerolipid metabolism.</title>
        <authorList>
            <person name="Shockey J.M."/>
            <person name="Fulda M.S."/>
            <person name="Browse J.A."/>
        </authorList>
    </citation>
    <scope>NUCLEOTIDE SEQUENCE [MRNA]</scope>
    <scope>GENE FAMILY</scope>
    <scope>ENZYME ACTIVITY</scope>
</reference>
<reference key="2">
    <citation type="journal article" date="1999" name="Nature">
        <title>Sequence and analysis of chromosome 4 of the plant Arabidopsis thaliana.</title>
        <authorList>
            <person name="Mayer K.F.X."/>
            <person name="Schueller C."/>
            <person name="Wambutt R."/>
            <person name="Murphy G."/>
            <person name="Volckaert G."/>
            <person name="Pohl T."/>
            <person name="Duesterhoeft A."/>
            <person name="Stiekema W."/>
            <person name="Entian K.-D."/>
            <person name="Terryn N."/>
            <person name="Harris B."/>
            <person name="Ansorge W."/>
            <person name="Brandt P."/>
            <person name="Grivell L.A."/>
            <person name="Rieger M."/>
            <person name="Weichselgartner M."/>
            <person name="de Simone V."/>
            <person name="Obermaier B."/>
            <person name="Mache R."/>
            <person name="Mueller M."/>
            <person name="Kreis M."/>
            <person name="Delseny M."/>
            <person name="Puigdomenech P."/>
            <person name="Watson M."/>
            <person name="Schmidtheini T."/>
            <person name="Reichert B."/>
            <person name="Portetelle D."/>
            <person name="Perez-Alonso M."/>
            <person name="Boutry M."/>
            <person name="Bancroft I."/>
            <person name="Vos P."/>
            <person name="Hoheisel J."/>
            <person name="Zimmermann W."/>
            <person name="Wedler H."/>
            <person name="Ridley P."/>
            <person name="Langham S.-A."/>
            <person name="McCullagh B."/>
            <person name="Bilham L."/>
            <person name="Robben J."/>
            <person name="van der Schueren J."/>
            <person name="Grymonprez B."/>
            <person name="Chuang Y.-J."/>
            <person name="Vandenbussche F."/>
            <person name="Braeken M."/>
            <person name="Weltjens I."/>
            <person name="Voet M."/>
            <person name="Bastiaens I."/>
            <person name="Aert R."/>
            <person name="Defoor E."/>
            <person name="Weitzenegger T."/>
            <person name="Bothe G."/>
            <person name="Ramsperger U."/>
            <person name="Hilbert H."/>
            <person name="Braun M."/>
            <person name="Holzer E."/>
            <person name="Brandt A."/>
            <person name="Peters S."/>
            <person name="van Staveren M."/>
            <person name="Dirkse W."/>
            <person name="Mooijman P."/>
            <person name="Klein Lankhorst R."/>
            <person name="Rose M."/>
            <person name="Hauf J."/>
            <person name="Koetter P."/>
            <person name="Berneiser S."/>
            <person name="Hempel S."/>
            <person name="Feldpausch M."/>
            <person name="Lamberth S."/>
            <person name="Van den Daele H."/>
            <person name="De Keyser A."/>
            <person name="Buysshaert C."/>
            <person name="Gielen J."/>
            <person name="Villarroel R."/>
            <person name="De Clercq R."/>
            <person name="van Montagu M."/>
            <person name="Rogers J."/>
            <person name="Cronin A."/>
            <person name="Quail M.A."/>
            <person name="Bray-Allen S."/>
            <person name="Clark L."/>
            <person name="Doggett J."/>
            <person name="Hall S."/>
            <person name="Kay M."/>
            <person name="Lennard N."/>
            <person name="McLay K."/>
            <person name="Mayes R."/>
            <person name="Pettett A."/>
            <person name="Rajandream M.A."/>
            <person name="Lyne M."/>
            <person name="Benes V."/>
            <person name="Rechmann S."/>
            <person name="Borkova D."/>
            <person name="Bloecker H."/>
            <person name="Scharfe M."/>
            <person name="Grimm M."/>
            <person name="Loehnert T.-H."/>
            <person name="Dose S."/>
            <person name="de Haan M."/>
            <person name="Maarse A.C."/>
            <person name="Schaefer M."/>
            <person name="Mueller-Auer S."/>
            <person name="Gabel C."/>
            <person name="Fuchs M."/>
            <person name="Fartmann B."/>
            <person name="Granderath K."/>
            <person name="Dauner D."/>
            <person name="Herzl A."/>
            <person name="Neumann S."/>
            <person name="Argiriou A."/>
            <person name="Vitale D."/>
            <person name="Liguori R."/>
            <person name="Piravandi E."/>
            <person name="Massenet O."/>
            <person name="Quigley F."/>
            <person name="Clabauld G."/>
            <person name="Muendlein A."/>
            <person name="Felber R."/>
            <person name="Schnabl S."/>
            <person name="Hiller R."/>
            <person name="Schmidt W."/>
            <person name="Lecharny A."/>
            <person name="Aubourg S."/>
            <person name="Chefdor F."/>
            <person name="Cooke R."/>
            <person name="Berger C."/>
            <person name="Monfort A."/>
            <person name="Casacuberta E."/>
            <person name="Gibbons T."/>
            <person name="Weber N."/>
            <person name="Vandenbol M."/>
            <person name="Bargues M."/>
            <person name="Terol J."/>
            <person name="Torres A."/>
            <person name="Perez-Perez A."/>
            <person name="Purnelle B."/>
            <person name="Bent E."/>
            <person name="Johnson S."/>
            <person name="Tacon D."/>
            <person name="Jesse T."/>
            <person name="Heijnen L."/>
            <person name="Schwarz S."/>
            <person name="Scholler P."/>
            <person name="Heber S."/>
            <person name="Francs P."/>
            <person name="Bielke C."/>
            <person name="Frishman D."/>
            <person name="Haase D."/>
            <person name="Lemcke K."/>
            <person name="Mewes H.-W."/>
            <person name="Stocker S."/>
            <person name="Zaccaria P."/>
            <person name="Bevan M."/>
            <person name="Wilson R.K."/>
            <person name="de la Bastide M."/>
            <person name="Habermann K."/>
            <person name="Parnell L."/>
            <person name="Dedhia N."/>
            <person name="Gnoj L."/>
            <person name="Schutz K."/>
            <person name="Huang E."/>
            <person name="Spiegel L."/>
            <person name="Sekhon M."/>
            <person name="Murray J."/>
            <person name="Sheet P."/>
            <person name="Cordes M."/>
            <person name="Abu-Threideh J."/>
            <person name="Stoneking T."/>
            <person name="Kalicki J."/>
            <person name="Graves T."/>
            <person name="Harmon G."/>
            <person name="Edwards J."/>
            <person name="Latreille P."/>
            <person name="Courtney L."/>
            <person name="Cloud J."/>
            <person name="Abbott A."/>
            <person name="Scott K."/>
            <person name="Johnson D."/>
            <person name="Minx P."/>
            <person name="Bentley D."/>
            <person name="Fulton B."/>
            <person name="Miller N."/>
            <person name="Greco T."/>
            <person name="Kemp K."/>
            <person name="Kramer J."/>
            <person name="Fulton L."/>
            <person name="Mardis E."/>
            <person name="Dante M."/>
            <person name="Pepin K."/>
            <person name="Hillier L.W."/>
            <person name="Nelson J."/>
            <person name="Spieth J."/>
            <person name="Ryan E."/>
            <person name="Andrews S."/>
            <person name="Geisel C."/>
            <person name="Layman D."/>
            <person name="Du H."/>
            <person name="Ali J."/>
            <person name="Berghoff A."/>
            <person name="Jones K."/>
            <person name="Drone K."/>
            <person name="Cotton M."/>
            <person name="Joshu C."/>
            <person name="Antonoiu B."/>
            <person name="Zidanic M."/>
            <person name="Strong C."/>
            <person name="Sun H."/>
            <person name="Lamar B."/>
            <person name="Yordan C."/>
            <person name="Ma P."/>
            <person name="Zhong J."/>
            <person name="Preston R."/>
            <person name="Vil D."/>
            <person name="Shekher M."/>
            <person name="Matero A."/>
            <person name="Shah R."/>
            <person name="Swaby I.K."/>
            <person name="O'Shaughnessy A."/>
            <person name="Rodriguez M."/>
            <person name="Hoffman J."/>
            <person name="Till S."/>
            <person name="Granat S."/>
            <person name="Shohdy N."/>
            <person name="Hasegawa A."/>
            <person name="Hameed A."/>
            <person name="Lodhi M."/>
            <person name="Johnson A."/>
            <person name="Chen E."/>
            <person name="Marra M.A."/>
            <person name="Martienssen R."/>
            <person name="McCombie W.R."/>
        </authorList>
    </citation>
    <scope>NUCLEOTIDE SEQUENCE [LARGE SCALE GENOMIC DNA]</scope>
    <source>
        <strain>cv. Columbia</strain>
    </source>
</reference>
<reference key="3">
    <citation type="journal article" date="2017" name="Plant J.">
        <title>Araport11: a complete reannotation of the Arabidopsis thaliana reference genome.</title>
        <authorList>
            <person name="Cheng C.Y."/>
            <person name="Krishnakumar V."/>
            <person name="Chan A.P."/>
            <person name="Thibaud-Nissen F."/>
            <person name="Schobel S."/>
            <person name="Town C.D."/>
        </authorList>
    </citation>
    <scope>GENOME REANNOTATION</scope>
    <source>
        <strain>cv. Columbia</strain>
    </source>
</reference>
<reference key="4">
    <citation type="journal article" date="2003" name="Science">
        <title>Empirical analysis of transcriptional activity in the Arabidopsis genome.</title>
        <authorList>
            <person name="Yamada K."/>
            <person name="Lim J."/>
            <person name="Dale J.M."/>
            <person name="Chen H."/>
            <person name="Shinn P."/>
            <person name="Palm C.J."/>
            <person name="Southwick A.M."/>
            <person name="Wu H.C."/>
            <person name="Kim C.J."/>
            <person name="Nguyen M."/>
            <person name="Pham P.K."/>
            <person name="Cheuk R.F."/>
            <person name="Karlin-Newmann G."/>
            <person name="Liu S.X."/>
            <person name="Lam B."/>
            <person name="Sakano H."/>
            <person name="Wu T."/>
            <person name="Yu G."/>
            <person name="Miranda M."/>
            <person name="Quach H.L."/>
            <person name="Tripp M."/>
            <person name="Chang C.H."/>
            <person name="Lee J.M."/>
            <person name="Toriumi M.J."/>
            <person name="Chan M.M."/>
            <person name="Tang C.C."/>
            <person name="Onodera C.S."/>
            <person name="Deng J.M."/>
            <person name="Akiyama K."/>
            <person name="Ansari Y."/>
            <person name="Arakawa T."/>
            <person name="Banh J."/>
            <person name="Banno F."/>
            <person name="Bowser L."/>
            <person name="Brooks S.Y."/>
            <person name="Carninci P."/>
            <person name="Chao Q."/>
            <person name="Choy N."/>
            <person name="Enju A."/>
            <person name="Goldsmith A.D."/>
            <person name="Gurjal M."/>
            <person name="Hansen N.F."/>
            <person name="Hayashizaki Y."/>
            <person name="Johnson-Hopson C."/>
            <person name="Hsuan V.W."/>
            <person name="Iida K."/>
            <person name="Karnes M."/>
            <person name="Khan S."/>
            <person name="Koesema E."/>
            <person name="Ishida J."/>
            <person name="Jiang P.X."/>
            <person name="Jones T."/>
            <person name="Kawai J."/>
            <person name="Kamiya A."/>
            <person name="Meyers C."/>
            <person name="Nakajima M."/>
            <person name="Narusaka M."/>
            <person name="Seki M."/>
            <person name="Sakurai T."/>
            <person name="Satou M."/>
            <person name="Tamse R."/>
            <person name="Vaysberg M."/>
            <person name="Wallender E.K."/>
            <person name="Wong C."/>
            <person name="Yamamura Y."/>
            <person name="Yuan S."/>
            <person name="Shinozaki K."/>
            <person name="Davis R.W."/>
            <person name="Theologis A."/>
            <person name="Ecker J.R."/>
        </authorList>
    </citation>
    <scope>NUCLEOTIDE SEQUENCE [LARGE SCALE MRNA]</scope>
    <source>
        <strain>cv. Columbia</strain>
    </source>
</reference>
<reference key="5">
    <citation type="journal article" date="2003" name="Plant Physiol.">
        <title>Arabidopsis contains a large superfamily of acyl-activating enzymes. Phylogenetic and biochemical analysis reveals a new class of acyl-coenzyme a synthetases.</title>
        <authorList>
            <person name="Shockey J.M."/>
            <person name="Fulda M.S."/>
            <person name="Browse J."/>
        </authorList>
    </citation>
    <scope>GENE FAMILY ORGANIZATION</scope>
</reference>
<comment type="function">
    <text>Activation of long-chain fatty acids for both synthesis of cellular lipids, and degradation via beta-oxidation. Preferentially uses palmitate, palmitoleate, oleate and linoleate.</text>
</comment>
<comment type="catalytic activity">
    <reaction evidence="3">
        <text>a long-chain fatty acid + ATP + CoA = a long-chain fatty acyl-CoA + AMP + diphosphate</text>
        <dbReference type="Rhea" id="RHEA:15421"/>
        <dbReference type="ChEBI" id="CHEBI:30616"/>
        <dbReference type="ChEBI" id="CHEBI:33019"/>
        <dbReference type="ChEBI" id="CHEBI:57287"/>
        <dbReference type="ChEBI" id="CHEBI:57560"/>
        <dbReference type="ChEBI" id="CHEBI:83139"/>
        <dbReference type="ChEBI" id="CHEBI:456215"/>
        <dbReference type="EC" id="6.2.1.3"/>
    </reaction>
</comment>
<comment type="cofactor">
    <cofactor evidence="1">
        <name>Mg(2+)</name>
        <dbReference type="ChEBI" id="CHEBI:18420"/>
    </cofactor>
</comment>
<comment type="pathway">
    <text>Lipid metabolism; fatty acid metabolism.</text>
</comment>
<comment type="similarity">
    <text evidence="4">Belongs to the ATP-dependent AMP-binding enzyme family.</text>
</comment>
<gene>
    <name type="primary">LACS4</name>
    <name type="ordered locus">At4g23850</name>
    <name type="ORF">T32A16_20</name>
</gene>
<proteinExistence type="evidence at transcript level"/>
<protein>
    <recommendedName>
        <fullName>Long chain acyl-CoA synthetase 4</fullName>
        <ecNumber>6.2.1.3</ecNumber>
    </recommendedName>
</protein>
<sequence length="666" mass="74508">MSQQKKYIFQVEEGKEGSDGRPSVGPVYRSIFAKDGFPDPIEGMDSCWDVFRMSVEKYPNNPMLGRREIVDGKPGKYVWQTYQEVYDIVMKLGNSLRSVGVKDEAKCGIYGANSPEWIISMEACNAHGLYCVPLYDTLGADAVEFIISHSEVSIVFVEEKKISELFKTCPNSTEYMKTVVSFGGVSREQKEEAETFGLVIYAWDEFLKLGEGKQYDLPIKKKSDICTIMYTSGTTGDPKGVMISNESIVTLIAGVIRLLKSANEALTVKDVYLSYLPLAHIFDRVIEECFIQHGAAIGFWRGDVKLLIEDLAELKPTIFCAVPRVLDRVYSGLQKKLSDGGFLKKFIFDSAFSYKFGYMKKGQSHVEASPLFDKLVFSKVKQGLGGNVRIILSGAAPLASHVESFLRVVACCHVLQGYGLTESCAGTFVSLPDELGMLGTVGPPVPNVDIRLESVPEMEYDALASTARGEICIRGKTLFSGYYKREDLTKEVLIDGWLHTGDVGEWQPDGSMKIIDRKKNIFKLSQGEYVAVENIENIYGEVQAVDSVWVYGNSFESFLIAIANPNQHILERWAAENGVSGDYDALCQNEKAKEFILGELVKMAKEKKMKGFEIIKAIHLDPVPFDMERDLLTPTFKKKRPQLLKYYQSVIDEMYKTINAKFASRG</sequence>
<keyword id="KW-0067">ATP-binding</keyword>
<keyword id="KW-0276">Fatty acid metabolism</keyword>
<keyword id="KW-0436">Ligase</keyword>
<keyword id="KW-0443">Lipid metabolism</keyword>
<keyword id="KW-0460">Magnesium</keyword>
<keyword id="KW-0547">Nucleotide-binding</keyword>
<keyword id="KW-1185">Reference proteome</keyword>